<keyword id="KW-0002">3D-structure</keyword>
<keyword id="KW-0156">Chromatin regulator</keyword>
<keyword id="KW-0539">Nucleus</keyword>
<keyword id="KW-1185">Reference proteome</keyword>
<keyword id="KW-0678">Repressor</keyword>
<keyword id="KW-0804">Transcription</keyword>
<keyword id="KW-0805">Transcription regulation</keyword>
<evidence type="ECO:0000256" key="1">
    <source>
        <dbReference type="SAM" id="MobiDB-lite"/>
    </source>
</evidence>
<evidence type="ECO:0000269" key="2">
    <source>
    </source>
</evidence>
<evidence type="ECO:0000269" key="3">
    <source>
    </source>
</evidence>
<evidence type="ECO:0000269" key="4">
    <source>
    </source>
</evidence>
<evidence type="ECO:0000269" key="5">
    <source>
    </source>
</evidence>
<evidence type="ECO:0000269" key="6">
    <source>
    </source>
</evidence>
<evidence type="ECO:0000269" key="7">
    <source>
    </source>
</evidence>
<evidence type="ECO:0000269" key="8">
    <source>
    </source>
</evidence>
<evidence type="ECO:0000305" key="9"/>
<evidence type="ECO:0007829" key="10">
    <source>
        <dbReference type="PDB" id="8HPO"/>
    </source>
</evidence>
<sequence length="201" mass="23026">MARPVNTNAETESRGRPTQGGGYASNNNGSCNNNNGSNNNNNNNNNNNNNSNNSNNNNGPTSSGRTNGKQRLTAAQQQYIKNLIETHITDNHPDLRPKSHPMDFEEYTDAFLRRYKDHFQLDVPDNLTLQGYLLGSKLGAKTYSYKRNTQGQHDKRIHKRDLANVVRRHFDEHSIKETDCIPQFIYKVKNQKKKFKMEFRG</sequence>
<organism>
    <name type="scientific">Saccharomyces cerevisiae (strain ATCC 204508 / S288c)</name>
    <name type="common">Baker's yeast</name>
    <dbReference type="NCBI Taxonomy" id="559292"/>
    <lineage>
        <taxon>Eukaryota</taxon>
        <taxon>Fungi</taxon>
        <taxon>Dikarya</taxon>
        <taxon>Ascomycota</taxon>
        <taxon>Saccharomycotina</taxon>
        <taxon>Saccharomycetes</taxon>
        <taxon>Saccharomycetales</taxon>
        <taxon>Saccharomycetaceae</taxon>
        <taxon>Saccharomyces</taxon>
    </lineage>
</organism>
<comment type="function">
    <text evidence="2 8">Component of the RPD3C(L) histone deacetylase complex (HDAC) responsible for the deacetylation of lysine residues on the N-terminal part of the core histones (H2A, H2B, H3 and H4). Histone deacetylation gives a tag for epigenetic repression and plays an important role in transcriptional regulation, cell cycle progression and developmental events.</text>
</comment>
<comment type="subunit">
    <text evidence="3 6 7">Component of the RPD3C(L) complex composed of at least ASH1, CTI6, DEP1, PHO23, RPD3, RXT2, RXT3, SAP30, SDS3, SIN3, UME1 and UME6.</text>
</comment>
<comment type="subcellular location">
    <subcellularLocation>
        <location evidence="4">Nucleus</location>
    </subcellularLocation>
</comment>
<comment type="miscellaneous">
    <text evidence="5">Present with 704 molecules/cell in log phase SD medium.</text>
</comment>
<comment type="similarity">
    <text evidence="9">Belongs to the SAP30 family.</text>
</comment>
<name>SAP30_YEAST</name>
<accession>P38429</accession>
<accession>D6W089</accession>
<accession>Q03501</accession>
<feature type="chain" id="PRO_0000203345" description="Transcriptional regulatory protein SAP30">
    <location>
        <begin position="1"/>
        <end position="201"/>
    </location>
</feature>
<feature type="region of interest" description="Disordered" evidence="1">
    <location>
        <begin position="1"/>
        <end position="70"/>
    </location>
</feature>
<feature type="compositionally biased region" description="Polar residues" evidence="1">
    <location>
        <begin position="1"/>
        <end position="10"/>
    </location>
</feature>
<feature type="compositionally biased region" description="Low complexity" evidence="1">
    <location>
        <begin position="25"/>
        <end position="59"/>
    </location>
</feature>
<feature type="compositionally biased region" description="Polar residues" evidence="1">
    <location>
        <begin position="60"/>
        <end position="70"/>
    </location>
</feature>
<feature type="sequence conflict" description="In Ref. 1; AAA35222." evidence="9" ref="1">
    <original>C</original>
    <variation>S</variation>
    <location>
        <position position="31"/>
    </location>
</feature>
<feature type="sequence conflict" description="In Ref. 1; AAA35222." evidence="9" ref="1">
    <original>N</original>
    <variation>S</variation>
    <location>
        <position position="48"/>
    </location>
</feature>
<feature type="helix" evidence="10">
    <location>
        <begin position="76"/>
        <end position="87"/>
    </location>
</feature>
<feature type="turn" evidence="10">
    <location>
        <begin position="108"/>
        <end position="110"/>
    </location>
</feature>
<feature type="helix" evidence="10">
    <location>
        <begin position="111"/>
        <end position="118"/>
    </location>
</feature>
<feature type="helix" evidence="10">
    <location>
        <begin position="130"/>
        <end position="133"/>
    </location>
</feature>
<feature type="helix" evidence="10">
    <location>
        <begin position="139"/>
        <end position="141"/>
    </location>
</feature>
<feature type="helix" evidence="10">
    <location>
        <begin position="143"/>
        <end position="148"/>
    </location>
</feature>
<feature type="strand" evidence="10">
    <location>
        <begin position="149"/>
        <end position="151"/>
    </location>
</feature>
<feature type="helix" evidence="10">
    <location>
        <begin position="159"/>
        <end position="172"/>
    </location>
</feature>
<feature type="helix" evidence="10">
    <location>
        <begin position="180"/>
        <end position="188"/>
    </location>
</feature>
<feature type="turn" evidence="10">
    <location>
        <begin position="189"/>
        <end position="192"/>
    </location>
</feature>
<feature type="strand" evidence="10">
    <location>
        <begin position="194"/>
        <end position="196"/>
    </location>
</feature>
<gene>
    <name type="primary">SAP30</name>
    <name type="ordered locus">YMR263W</name>
    <name type="ORF">YM8156.05</name>
</gene>
<dbReference type="EMBL" id="M88172">
    <property type="protein sequence ID" value="AAA35222.1"/>
    <property type="molecule type" value="Genomic_DNA"/>
</dbReference>
<dbReference type="EMBL" id="Z49260">
    <property type="protein sequence ID" value="CAA89246.1"/>
    <property type="molecule type" value="Genomic_DNA"/>
</dbReference>
<dbReference type="EMBL" id="AY557972">
    <property type="protein sequence ID" value="AAS56298.1"/>
    <property type="molecule type" value="Genomic_DNA"/>
</dbReference>
<dbReference type="EMBL" id="BK006946">
    <property type="protein sequence ID" value="DAA10163.1"/>
    <property type="molecule type" value="Genomic_DNA"/>
</dbReference>
<dbReference type="PIR" id="S54475">
    <property type="entry name" value="S54475"/>
</dbReference>
<dbReference type="RefSeq" id="NP_013990.1">
    <property type="nucleotide sequence ID" value="NM_001182770.1"/>
</dbReference>
<dbReference type="PDB" id="8GA8">
    <property type="method" value="EM"/>
    <property type="resolution" value="3.50 A"/>
    <property type="chains" value="J=1-201"/>
</dbReference>
<dbReference type="PDB" id="8HPO">
    <property type="method" value="EM"/>
    <property type="resolution" value="2.60 A"/>
    <property type="chains" value="I=1-201"/>
</dbReference>
<dbReference type="PDBsum" id="8GA8"/>
<dbReference type="PDBsum" id="8HPO"/>
<dbReference type="EMDB" id="EMD-29892"/>
<dbReference type="EMDB" id="EMD-34935"/>
<dbReference type="SMR" id="P38429"/>
<dbReference type="BioGRID" id="35441">
    <property type="interactions" value="611"/>
</dbReference>
<dbReference type="ComplexPortal" id="CPX-1852">
    <property type="entry name" value="RPD3L histone deacetylase complex"/>
</dbReference>
<dbReference type="DIP" id="DIP-3846N"/>
<dbReference type="FunCoup" id="P38429">
    <property type="interactions" value="172"/>
</dbReference>
<dbReference type="IntAct" id="P38429">
    <property type="interactions" value="18"/>
</dbReference>
<dbReference type="MINT" id="P38429"/>
<dbReference type="STRING" id="4932.YMR263W"/>
<dbReference type="GlyGen" id="P38429">
    <property type="glycosylation" value="1 site"/>
</dbReference>
<dbReference type="iPTMnet" id="P38429"/>
<dbReference type="PaxDb" id="4932-YMR263W"/>
<dbReference type="PeptideAtlas" id="P38429"/>
<dbReference type="EnsemblFungi" id="YMR263W_mRNA">
    <property type="protein sequence ID" value="YMR263W"/>
    <property type="gene ID" value="YMR263W"/>
</dbReference>
<dbReference type="GeneID" id="855305"/>
<dbReference type="KEGG" id="sce:YMR263W"/>
<dbReference type="AGR" id="SGD:S000004876"/>
<dbReference type="SGD" id="S000004876">
    <property type="gene designation" value="SAP30"/>
</dbReference>
<dbReference type="VEuPathDB" id="FungiDB:YMR263W"/>
<dbReference type="eggNOG" id="ENOG502RZ9X">
    <property type="taxonomic scope" value="Eukaryota"/>
</dbReference>
<dbReference type="HOGENOM" id="CLU_106811_0_0_1"/>
<dbReference type="InParanoid" id="P38429"/>
<dbReference type="OMA" id="THITNNH"/>
<dbReference type="OrthoDB" id="510958at2759"/>
<dbReference type="BioCyc" id="YEAST:G3O-32937-MONOMER"/>
<dbReference type="Reactome" id="R-SCE-3214815">
    <property type="pathway name" value="HDACs deacetylate histones"/>
</dbReference>
<dbReference type="BioGRID-ORCS" id="855305">
    <property type="hits" value="0 hits in 10 CRISPR screens"/>
</dbReference>
<dbReference type="PRO" id="PR:P38429"/>
<dbReference type="Proteomes" id="UP000002311">
    <property type="component" value="Chromosome XIII"/>
</dbReference>
<dbReference type="RNAct" id="P38429">
    <property type="molecule type" value="protein"/>
</dbReference>
<dbReference type="GO" id="GO:0000118">
    <property type="term" value="C:histone deacetylase complex"/>
    <property type="evidence" value="ECO:0000318"/>
    <property type="project" value="GO_Central"/>
</dbReference>
<dbReference type="GO" id="GO:0005634">
    <property type="term" value="C:nucleus"/>
    <property type="evidence" value="ECO:0000303"/>
    <property type="project" value="ComplexPortal"/>
</dbReference>
<dbReference type="GO" id="GO:0033698">
    <property type="term" value="C:Rpd3L complex"/>
    <property type="evidence" value="ECO:0000314"/>
    <property type="project" value="SGD"/>
</dbReference>
<dbReference type="GO" id="GO:0070210">
    <property type="term" value="C:Rpd3L-Expanded complex"/>
    <property type="evidence" value="ECO:0007005"/>
    <property type="project" value="SGD"/>
</dbReference>
<dbReference type="GO" id="GO:0003712">
    <property type="term" value="F:transcription coregulator activity"/>
    <property type="evidence" value="ECO:0000318"/>
    <property type="project" value="GO_Central"/>
</dbReference>
<dbReference type="GO" id="GO:0003714">
    <property type="term" value="F:transcription corepressor activity"/>
    <property type="evidence" value="ECO:0000315"/>
    <property type="project" value="SGD"/>
</dbReference>
<dbReference type="GO" id="GO:0034605">
    <property type="term" value="P:cellular response to heat"/>
    <property type="evidence" value="ECO:0000315"/>
    <property type="project" value="SGD"/>
</dbReference>
<dbReference type="GO" id="GO:0061188">
    <property type="term" value="P:negative regulation of rDNA heterochromatin formation"/>
    <property type="evidence" value="ECO:0000315"/>
    <property type="project" value="SGD"/>
</dbReference>
<dbReference type="GO" id="GO:0061186">
    <property type="term" value="P:negative regulation of silent mating-type cassette heterochromatin formation"/>
    <property type="evidence" value="ECO:0000315"/>
    <property type="project" value="SGD"/>
</dbReference>
<dbReference type="GO" id="GO:0016479">
    <property type="term" value="P:negative regulation of transcription by RNA polymerase I"/>
    <property type="evidence" value="ECO:0000315"/>
    <property type="project" value="SGD"/>
</dbReference>
<dbReference type="GO" id="GO:0006334">
    <property type="term" value="P:nucleosome assembly"/>
    <property type="evidence" value="ECO:0000303"/>
    <property type="project" value="ComplexPortal"/>
</dbReference>
<dbReference type="GO" id="GO:2000219">
    <property type="term" value="P:positive regulation of invasive growth in response to glucose limitation"/>
    <property type="evidence" value="ECO:0000315"/>
    <property type="project" value="SGD"/>
</dbReference>
<dbReference type="GO" id="GO:0045944">
    <property type="term" value="P:positive regulation of transcription by RNA polymerase II"/>
    <property type="evidence" value="ECO:0000315"/>
    <property type="project" value="SGD"/>
</dbReference>
<dbReference type="GO" id="GO:0006355">
    <property type="term" value="P:regulation of DNA-templated transcription"/>
    <property type="evidence" value="ECO:0000318"/>
    <property type="project" value="GO_Central"/>
</dbReference>
<dbReference type="GO" id="GO:0006357">
    <property type="term" value="P:regulation of transcription by RNA polymerase II"/>
    <property type="evidence" value="ECO:0000303"/>
    <property type="project" value="ComplexPortal"/>
</dbReference>
<dbReference type="Gene3D" id="6.10.160.20">
    <property type="match status" value="1"/>
</dbReference>
<dbReference type="InterPro" id="IPR024145">
    <property type="entry name" value="His_deAcase_SAP30/SAP30L"/>
</dbReference>
<dbReference type="InterPro" id="IPR038291">
    <property type="entry name" value="SAP30_C_sf"/>
</dbReference>
<dbReference type="InterPro" id="IPR025718">
    <property type="entry name" value="SAP30_Sin3-bd"/>
</dbReference>
<dbReference type="PANTHER" id="PTHR13286:SF6">
    <property type="entry name" value="HISTONE DEACETYLASE COMPLEX SUBUNIT SAP30L-RELATED"/>
    <property type="match status" value="1"/>
</dbReference>
<dbReference type="PANTHER" id="PTHR13286">
    <property type="entry name" value="SAP30"/>
    <property type="match status" value="1"/>
</dbReference>
<dbReference type="Pfam" id="PF13867">
    <property type="entry name" value="SAP30_Sin3_bdg"/>
    <property type="match status" value="1"/>
</dbReference>
<proteinExistence type="evidence at protein level"/>
<protein>
    <recommendedName>
        <fullName>Transcriptional regulatory protein SAP30</fullName>
    </recommendedName>
</protein>
<reference key="1">
    <citation type="submission" date="1992-06" db="EMBL/GenBank/DDBJ databases">
        <title>A large open reading frame in the yeast genome containing homology to the cif1 gene.</title>
        <authorList>
            <person name="Manning A.M."/>
            <person name="Rosenbloom C.L."/>
            <person name="Beaudet A.L."/>
        </authorList>
    </citation>
    <scope>NUCLEOTIDE SEQUENCE [GENOMIC DNA]</scope>
</reference>
<reference key="2">
    <citation type="journal article" date="1997" name="Nature">
        <title>The nucleotide sequence of Saccharomyces cerevisiae chromosome XIII.</title>
        <authorList>
            <person name="Bowman S."/>
            <person name="Churcher C.M."/>
            <person name="Badcock K."/>
            <person name="Brown D."/>
            <person name="Chillingworth T."/>
            <person name="Connor R."/>
            <person name="Dedman K."/>
            <person name="Devlin K."/>
            <person name="Gentles S."/>
            <person name="Hamlin N."/>
            <person name="Hunt S."/>
            <person name="Jagels K."/>
            <person name="Lye G."/>
            <person name="Moule S."/>
            <person name="Odell C."/>
            <person name="Pearson D."/>
            <person name="Rajandream M.A."/>
            <person name="Rice P."/>
            <person name="Skelton J."/>
            <person name="Walsh S.V."/>
            <person name="Whitehead S."/>
            <person name="Barrell B.G."/>
        </authorList>
    </citation>
    <scope>NUCLEOTIDE SEQUENCE [LARGE SCALE GENOMIC DNA]</scope>
    <source>
        <strain>ATCC 204508 / S288c</strain>
    </source>
</reference>
<reference key="3">
    <citation type="journal article" date="2014" name="G3 (Bethesda)">
        <title>The reference genome sequence of Saccharomyces cerevisiae: Then and now.</title>
        <authorList>
            <person name="Engel S.R."/>
            <person name="Dietrich F.S."/>
            <person name="Fisk D.G."/>
            <person name="Binkley G."/>
            <person name="Balakrishnan R."/>
            <person name="Costanzo M.C."/>
            <person name="Dwight S.S."/>
            <person name="Hitz B.C."/>
            <person name="Karra K."/>
            <person name="Nash R.S."/>
            <person name="Weng S."/>
            <person name="Wong E.D."/>
            <person name="Lloyd P."/>
            <person name="Skrzypek M.S."/>
            <person name="Miyasato S.R."/>
            <person name="Simison M."/>
            <person name="Cherry J.M."/>
        </authorList>
    </citation>
    <scope>GENOME REANNOTATION</scope>
    <source>
        <strain>ATCC 204508 / S288c</strain>
    </source>
</reference>
<reference key="4">
    <citation type="journal article" date="2007" name="Genome Res.">
        <title>Approaching a complete repository of sequence-verified protein-encoding clones for Saccharomyces cerevisiae.</title>
        <authorList>
            <person name="Hu Y."/>
            <person name="Rolfs A."/>
            <person name="Bhullar B."/>
            <person name="Murthy T.V.S."/>
            <person name="Zhu C."/>
            <person name="Berger M.F."/>
            <person name="Camargo A.A."/>
            <person name="Kelley F."/>
            <person name="McCarron S."/>
            <person name="Jepson D."/>
            <person name="Richardson A."/>
            <person name="Raphael J."/>
            <person name="Moreira D."/>
            <person name="Taycher E."/>
            <person name="Zuo D."/>
            <person name="Mohr S."/>
            <person name="Kane M.F."/>
            <person name="Williamson J."/>
            <person name="Simpson A.J.G."/>
            <person name="Bulyk M.L."/>
            <person name="Harlow E."/>
            <person name="Marsischky G."/>
            <person name="Kolodner R.D."/>
            <person name="LaBaer J."/>
        </authorList>
    </citation>
    <scope>NUCLEOTIDE SEQUENCE [GENOMIC DNA]</scope>
    <source>
        <strain>ATCC 204508 / S288c</strain>
    </source>
</reference>
<reference key="5">
    <citation type="journal article" date="1998" name="Mol. Cell">
        <title>SAP30, a novel protein conserved between human and yeast, is a component of a histone deacetylase complex.</title>
        <authorList>
            <person name="Zhang Y."/>
            <person name="Sun Z.-W."/>
            <person name="Iratni R."/>
            <person name="Erdjument-Bromage H."/>
            <person name="Tempst P."/>
            <person name="Hampsey M."/>
            <person name="Reinberg D."/>
        </authorList>
    </citation>
    <scope>FUNCTION</scope>
</reference>
<reference key="6">
    <citation type="journal article" date="1999" name="Genetics">
        <title>A general requirement for the Sin3-Rpd3 histone deacetylase complex in regulating silencing in Saccharomyces cerevisiae.</title>
        <authorList>
            <person name="Sun Z.-W."/>
            <person name="Hampsey M."/>
        </authorList>
    </citation>
    <scope>FUNCTION</scope>
</reference>
<reference key="7">
    <citation type="journal article" date="2003" name="J. Biol. Chem.">
        <title>Opposite role of yeast ING family members in p53-dependent transcriptional activation.</title>
        <authorList>
            <person name="Nourani A."/>
            <person name="Howe L."/>
            <person name="Pray-Grant M.G."/>
            <person name="Workman J.L."/>
            <person name="Grant P.A."/>
            <person name="Cote J."/>
        </authorList>
    </citation>
    <scope>IDENTIFICATION IN THE RPD3 COMPLEX</scope>
    <scope>IDENTIFICATION BY MASS SPECTROMETRY</scope>
</reference>
<reference key="8">
    <citation type="journal article" date="2003" name="Nature">
        <title>Global analysis of protein localization in budding yeast.</title>
        <authorList>
            <person name="Huh W.-K."/>
            <person name="Falvo J.V."/>
            <person name="Gerke L.C."/>
            <person name="Carroll A.S."/>
            <person name="Howson R.W."/>
            <person name="Weissman J.S."/>
            <person name="O'Shea E.K."/>
        </authorList>
    </citation>
    <scope>SUBCELLULAR LOCATION [LARGE SCALE ANALYSIS]</scope>
</reference>
<reference key="9">
    <citation type="journal article" date="2003" name="Nature">
        <title>Global analysis of protein expression in yeast.</title>
        <authorList>
            <person name="Ghaemmaghami S."/>
            <person name="Huh W.-K."/>
            <person name="Bower K."/>
            <person name="Howson R.W."/>
            <person name="Belle A."/>
            <person name="Dephoure N."/>
            <person name="O'Shea E.K."/>
            <person name="Weissman J.S."/>
        </authorList>
    </citation>
    <scope>LEVEL OF PROTEIN EXPRESSION [LARGE SCALE ANALYSIS]</scope>
</reference>
<reference key="10">
    <citation type="journal article" date="2005" name="Biochim. Biophys. Acta">
        <title>Stable incorporation of sequence specific repressors Ash1 and Ume6 into the Rpd3L complex.</title>
        <authorList>
            <person name="Carrozza M.J."/>
            <person name="Florens L."/>
            <person name="Swanson S.K."/>
            <person name="Shia W.-J."/>
            <person name="Anderson S."/>
            <person name="Yates J."/>
            <person name="Washburn M.P."/>
            <person name="Workman J.L."/>
        </authorList>
    </citation>
    <scope>IDENTIFICATION IN THE RPD3C(L) COMPLEX</scope>
    <scope>IDENTIFICATION BY MASS SPECTROMETRY</scope>
</reference>
<reference key="11">
    <citation type="journal article" date="2005" name="Cell">
        <title>Cotranscriptional set2 methylation of histone H3 lysine 36 recruits a repressive Rpd3 complex.</title>
        <authorList>
            <person name="Keogh M.-C."/>
            <person name="Kurdistani S.K."/>
            <person name="Morris S.A."/>
            <person name="Ahn S.H."/>
            <person name="Podolny V."/>
            <person name="Collins S.R."/>
            <person name="Schuldiner M."/>
            <person name="Chin K."/>
            <person name="Punna T."/>
            <person name="Thompson N.J."/>
            <person name="Boone C."/>
            <person name="Emili A."/>
            <person name="Weissman J.S."/>
            <person name="Hughes T.R."/>
            <person name="Strahl B.D."/>
            <person name="Grunstein M."/>
            <person name="Greenblatt J.F."/>
            <person name="Buratowski S."/>
            <person name="Krogan N.J."/>
        </authorList>
    </citation>
    <scope>IDENTIFICATION IN THE RPD3C(L) COMPLEX</scope>
    <scope>IDENTIFICATION BY MASS SPECTROMETRY</scope>
</reference>